<evidence type="ECO:0000255" key="1"/>
<evidence type="ECO:0000256" key="2">
    <source>
        <dbReference type="SAM" id="MobiDB-lite"/>
    </source>
</evidence>
<evidence type="ECO:0000269" key="3">
    <source>
    </source>
</evidence>
<evidence type="ECO:0000305" key="4"/>
<evidence type="ECO:0000305" key="5">
    <source>
    </source>
</evidence>
<evidence type="ECO:0000312" key="6">
    <source>
        <dbReference type="MGI" id="MGI:1922145"/>
    </source>
</evidence>
<keyword id="KW-0966">Cell projection</keyword>
<keyword id="KW-0969">Cilium</keyword>
<keyword id="KW-0175">Coiled coil</keyword>
<keyword id="KW-0963">Cytoplasm</keyword>
<keyword id="KW-0206">Cytoskeleton</keyword>
<keyword id="KW-0282">Flagellum</keyword>
<keyword id="KW-0493">Microtubule</keyword>
<keyword id="KW-1185">Reference proteome</keyword>
<feature type="chain" id="PRO_0000279467" description="Coiled-coil domain-containing protein 181">
    <location>
        <begin position="1"/>
        <end position="509"/>
    </location>
</feature>
<feature type="region of interest" description="Disordered" evidence="2">
    <location>
        <begin position="1"/>
        <end position="122"/>
    </location>
</feature>
<feature type="region of interest" description="Disordered" evidence="2">
    <location>
        <begin position="237"/>
        <end position="369"/>
    </location>
</feature>
<feature type="coiled-coil region" evidence="1">
    <location>
        <begin position="335"/>
        <end position="377"/>
    </location>
</feature>
<feature type="coiled-coil region" evidence="1">
    <location>
        <begin position="418"/>
        <end position="488"/>
    </location>
</feature>
<feature type="compositionally biased region" description="Basic and acidic residues" evidence="2">
    <location>
        <begin position="22"/>
        <end position="33"/>
    </location>
</feature>
<feature type="compositionally biased region" description="Basic and acidic residues" evidence="2">
    <location>
        <begin position="41"/>
        <end position="56"/>
    </location>
</feature>
<feature type="compositionally biased region" description="Polar residues" evidence="2">
    <location>
        <begin position="60"/>
        <end position="69"/>
    </location>
</feature>
<feature type="compositionally biased region" description="Basic and acidic residues" evidence="2">
    <location>
        <begin position="70"/>
        <end position="82"/>
    </location>
</feature>
<feature type="compositionally biased region" description="Basic and acidic residues" evidence="2">
    <location>
        <begin position="266"/>
        <end position="275"/>
    </location>
</feature>
<feature type="compositionally biased region" description="Polar residues" evidence="2">
    <location>
        <begin position="319"/>
        <end position="333"/>
    </location>
</feature>
<feature type="compositionally biased region" description="Basic and acidic residues" evidence="2">
    <location>
        <begin position="337"/>
        <end position="369"/>
    </location>
</feature>
<feature type="sequence conflict" description="In Ref. 1; BAB29858." evidence="4" ref="1">
    <original>D</original>
    <variation>N</variation>
    <location>
        <position position="2"/>
    </location>
</feature>
<feature type="sequence conflict" description="In Ref. 1; BAE28754." evidence="4" ref="1">
    <original>E</original>
    <variation>K</variation>
    <location>
        <position position="39"/>
    </location>
</feature>
<feature type="sequence conflict" description="In Ref. 1; BAC36430." evidence="4" ref="1">
    <original>N</original>
    <variation>H</variation>
    <location>
        <position position="181"/>
    </location>
</feature>
<feature type="sequence conflict" description="In Ref. 1; BAC36430." evidence="4" ref="1">
    <original>M</original>
    <variation>I</variation>
    <location>
        <position position="401"/>
    </location>
</feature>
<name>CC181_MOUSE</name>
<sequence>MDEDKDIDSKESGEYEDDFEKDLEWLINDKEKSNGSTIEMACKKEDDLDQVLKENETETELGQQLSDPDNSPKDEALPRRNDFISVPSIQPLDPISDSDSENSFQDSKPENQKDLEDEEDEEVRRYIMEKIIEANKLLQTQEPVNDKRERKLKFKDKLVDLEVPPLEDSDTCKALLENETNMSGKLSQLCISGDLEQESVLVSVTDGSCEENDRKILVERDGKFELMNLQDIESQGFLPPISSANSVEHESSQLPLRAPNPSVGGIKKEESEAKGHVLPISPAGEPLAQVPQLLPNPKNRPSSAANPDVTKKARRSNHRIQSAGVSPVTSTYCLSPRQKELQKQLERKREKLKREEEQRKLEEENEKKKENEMVFKAWLQKKREQVIEMRRVQRAKQIEDMSSRQVNRDPQQAFRLWLKKKHEEQMKERKTEELRKQEECLFFLRGTEGRERAFRQWLRRKQIEKIAEQQAVKERARQLRLEARRSKQLQSSLYSIPEAKAFRFTDHYN</sequence>
<accession>Q80ZU5</accession>
<accession>Q3UF07</accession>
<accession>Q8C631</accession>
<accession>Q9CUL9</accession>
<dbReference type="EMBL" id="AK015464">
    <property type="protein sequence ID" value="BAB29858.1"/>
    <property type="molecule type" value="mRNA"/>
</dbReference>
<dbReference type="EMBL" id="AK076640">
    <property type="protein sequence ID" value="BAC36430.1"/>
    <property type="molecule type" value="mRNA"/>
</dbReference>
<dbReference type="EMBL" id="AK149168">
    <property type="protein sequence ID" value="BAE28754.1"/>
    <property type="molecule type" value="mRNA"/>
</dbReference>
<dbReference type="EMBL" id="BC048086">
    <property type="protein sequence ID" value="AAH48086.1"/>
    <property type="molecule type" value="mRNA"/>
</dbReference>
<dbReference type="CCDS" id="CCDS15434.1"/>
<dbReference type="RefSeq" id="NP_083391.2">
    <property type="nucleotide sequence ID" value="NM_029115.3"/>
</dbReference>
<dbReference type="SMR" id="Q80ZU5"/>
<dbReference type="BioGRID" id="217061">
    <property type="interactions" value="1"/>
</dbReference>
<dbReference type="FunCoup" id="Q80ZU5">
    <property type="interactions" value="65"/>
</dbReference>
<dbReference type="STRING" id="10090.ENSMUSP00000027867"/>
<dbReference type="iPTMnet" id="Q80ZU5"/>
<dbReference type="PhosphoSitePlus" id="Q80ZU5"/>
<dbReference type="SwissPalm" id="Q80ZU5"/>
<dbReference type="PaxDb" id="10090-ENSMUSP00000027867"/>
<dbReference type="ProteomicsDB" id="265586"/>
<dbReference type="Antibodypedia" id="34357">
    <property type="antibodies" value="93 antibodies from 12 providers"/>
</dbReference>
<dbReference type="DNASU" id="74895"/>
<dbReference type="Ensembl" id="ENSMUST00000027867.7">
    <property type="protein sequence ID" value="ENSMUSP00000027867.7"/>
    <property type="gene ID" value="ENSMUSG00000026578.7"/>
</dbReference>
<dbReference type="GeneID" id="74895"/>
<dbReference type="KEGG" id="mmu:74895"/>
<dbReference type="UCSC" id="uc007dif.2">
    <property type="organism name" value="mouse"/>
</dbReference>
<dbReference type="AGR" id="MGI:1922145"/>
<dbReference type="CTD" id="57821"/>
<dbReference type="MGI" id="MGI:1922145">
    <property type="gene designation" value="Ccdc181"/>
</dbReference>
<dbReference type="VEuPathDB" id="HostDB:ENSMUSG00000026578"/>
<dbReference type="eggNOG" id="ENOG502QV5R">
    <property type="taxonomic scope" value="Eukaryota"/>
</dbReference>
<dbReference type="GeneTree" id="ENSGT00390000018244"/>
<dbReference type="HOGENOM" id="CLU_040811_0_0_1"/>
<dbReference type="InParanoid" id="Q80ZU5"/>
<dbReference type="OMA" id="KAWLMRK"/>
<dbReference type="OrthoDB" id="6288248at2759"/>
<dbReference type="PhylomeDB" id="Q80ZU5"/>
<dbReference type="TreeFam" id="TF331115"/>
<dbReference type="BioGRID-ORCS" id="74895">
    <property type="hits" value="2 hits in 76 CRISPR screens"/>
</dbReference>
<dbReference type="ChiTaRS" id="Ccdc181">
    <property type="organism name" value="mouse"/>
</dbReference>
<dbReference type="PRO" id="PR:Q80ZU5"/>
<dbReference type="Proteomes" id="UP000000589">
    <property type="component" value="Chromosome 1"/>
</dbReference>
<dbReference type="RNAct" id="Q80ZU5">
    <property type="molecule type" value="protein"/>
</dbReference>
<dbReference type="Bgee" id="ENSMUSG00000026578">
    <property type="expression patterns" value="Expressed in seminiferous tubule of testis and 222 other cell types or tissues"/>
</dbReference>
<dbReference type="GO" id="GO:0005737">
    <property type="term" value="C:cytoplasm"/>
    <property type="evidence" value="ECO:0007669"/>
    <property type="project" value="UniProtKB-KW"/>
</dbReference>
<dbReference type="GO" id="GO:0002177">
    <property type="term" value="C:manchette"/>
    <property type="evidence" value="ECO:0000314"/>
    <property type="project" value="UniProtKB"/>
</dbReference>
<dbReference type="GO" id="GO:0005874">
    <property type="term" value="C:microtubule"/>
    <property type="evidence" value="ECO:0007669"/>
    <property type="project" value="UniProtKB-KW"/>
</dbReference>
<dbReference type="GO" id="GO:0036126">
    <property type="term" value="C:sperm flagellum"/>
    <property type="evidence" value="ECO:0000314"/>
    <property type="project" value="UniProtKB"/>
</dbReference>
<dbReference type="GO" id="GO:0008017">
    <property type="term" value="F:microtubule binding"/>
    <property type="evidence" value="ECO:0000314"/>
    <property type="project" value="UniProtKB"/>
</dbReference>
<dbReference type="InterPro" id="IPR026687">
    <property type="entry name" value="CCDC181"/>
</dbReference>
<dbReference type="PANTHER" id="PTHR14320">
    <property type="entry name" value="COILED-COIL DOMAIN-CONTAINING PROTEIN 181"/>
    <property type="match status" value="1"/>
</dbReference>
<dbReference type="PANTHER" id="PTHR14320:SF2">
    <property type="entry name" value="COILED-COIL DOMAIN-CONTAINING PROTEIN 181"/>
    <property type="match status" value="1"/>
</dbReference>
<organism>
    <name type="scientific">Mus musculus</name>
    <name type="common">Mouse</name>
    <dbReference type="NCBI Taxonomy" id="10090"/>
    <lineage>
        <taxon>Eukaryota</taxon>
        <taxon>Metazoa</taxon>
        <taxon>Chordata</taxon>
        <taxon>Craniata</taxon>
        <taxon>Vertebrata</taxon>
        <taxon>Euteleostomi</taxon>
        <taxon>Mammalia</taxon>
        <taxon>Eutheria</taxon>
        <taxon>Euarchontoglires</taxon>
        <taxon>Glires</taxon>
        <taxon>Rodentia</taxon>
        <taxon>Myomorpha</taxon>
        <taxon>Muroidea</taxon>
        <taxon>Muridae</taxon>
        <taxon>Murinae</taxon>
        <taxon>Mus</taxon>
        <taxon>Mus</taxon>
    </lineage>
</organism>
<proteinExistence type="evidence at protein level"/>
<comment type="function">
    <text evidence="5">Microtubule-binding protein that localizes to the microtubular manchette of elongating spermatids.</text>
</comment>
<comment type="subunit">
    <text evidence="3">Homodimer (PubMed:28283191). Interacts with HOOK1 (PubMed:28283191). Interacts with HOOK2 (PubMed:28283191). Interacts with HOOK3 (PubMed:28283191).</text>
</comment>
<comment type="subcellular location">
    <subcellularLocation>
        <location evidence="3">Cytoplasm</location>
        <location evidence="3">Cytoskeleton</location>
    </subcellularLocation>
    <subcellularLocation>
        <location evidence="3">Cell projection</location>
        <location evidence="3">Cilium</location>
        <location evidence="3">Flagellum</location>
    </subcellularLocation>
    <text evidence="3">Localizes to the microtubular manchette of elongating spermatids (PubMed:28283191). Localizes to the sperm flagella and to the basal half of motile cilia (PubMed:28283191).</text>
</comment>
<comment type="tissue specificity">
    <text evidence="3">Predominantly expressed in testis (PubMed:28283191). Expressed at lower level in brain, eye, trachea and lung (PubMed:28283191). Barely expressed in tongue, heart, liver, kidney, spleen and muscle (PubMed:28283191). Present at high level in elongating spermatids, whereas lower levels are observed in round spermatids (at protein level) (PubMed:28283191).</text>
</comment>
<comment type="developmental stage">
    <text evidence="3">In testis, expressed at low level until day 20, when round spermatids appear for the first time. After day 20, a sharp and constant increase of expression is observed.</text>
</comment>
<comment type="similarity">
    <text evidence="4">Belongs to the CCDC181 family.</text>
</comment>
<gene>
    <name evidence="6" type="primary">Ccdc181</name>
</gene>
<reference key="1">
    <citation type="journal article" date="2005" name="Science">
        <title>The transcriptional landscape of the mammalian genome.</title>
        <authorList>
            <person name="Carninci P."/>
            <person name="Kasukawa T."/>
            <person name="Katayama S."/>
            <person name="Gough J."/>
            <person name="Frith M.C."/>
            <person name="Maeda N."/>
            <person name="Oyama R."/>
            <person name="Ravasi T."/>
            <person name="Lenhard B."/>
            <person name="Wells C."/>
            <person name="Kodzius R."/>
            <person name="Shimokawa K."/>
            <person name="Bajic V.B."/>
            <person name="Brenner S.E."/>
            <person name="Batalov S."/>
            <person name="Forrest A.R."/>
            <person name="Zavolan M."/>
            <person name="Davis M.J."/>
            <person name="Wilming L.G."/>
            <person name="Aidinis V."/>
            <person name="Allen J.E."/>
            <person name="Ambesi-Impiombato A."/>
            <person name="Apweiler R."/>
            <person name="Aturaliya R.N."/>
            <person name="Bailey T.L."/>
            <person name="Bansal M."/>
            <person name="Baxter L."/>
            <person name="Beisel K.W."/>
            <person name="Bersano T."/>
            <person name="Bono H."/>
            <person name="Chalk A.M."/>
            <person name="Chiu K.P."/>
            <person name="Choudhary V."/>
            <person name="Christoffels A."/>
            <person name="Clutterbuck D.R."/>
            <person name="Crowe M.L."/>
            <person name="Dalla E."/>
            <person name="Dalrymple B.P."/>
            <person name="de Bono B."/>
            <person name="Della Gatta G."/>
            <person name="di Bernardo D."/>
            <person name="Down T."/>
            <person name="Engstrom P."/>
            <person name="Fagiolini M."/>
            <person name="Faulkner G."/>
            <person name="Fletcher C.F."/>
            <person name="Fukushima T."/>
            <person name="Furuno M."/>
            <person name="Futaki S."/>
            <person name="Gariboldi M."/>
            <person name="Georgii-Hemming P."/>
            <person name="Gingeras T.R."/>
            <person name="Gojobori T."/>
            <person name="Green R.E."/>
            <person name="Gustincich S."/>
            <person name="Harbers M."/>
            <person name="Hayashi Y."/>
            <person name="Hensch T.K."/>
            <person name="Hirokawa N."/>
            <person name="Hill D."/>
            <person name="Huminiecki L."/>
            <person name="Iacono M."/>
            <person name="Ikeo K."/>
            <person name="Iwama A."/>
            <person name="Ishikawa T."/>
            <person name="Jakt M."/>
            <person name="Kanapin A."/>
            <person name="Katoh M."/>
            <person name="Kawasawa Y."/>
            <person name="Kelso J."/>
            <person name="Kitamura H."/>
            <person name="Kitano H."/>
            <person name="Kollias G."/>
            <person name="Krishnan S.P."/>
            <person name="Kruger A."/>
            <person name="Kummerfeld S.K."/>
            <person name="Kurochkin I.V."/>
            <person name="Lareau L.F."/>
            <person name="Lazarevic D."/>
            <person name="Lipovich L."/>
            <person name="Liu J."/>
            <person name="Liuni S."/>
            <person name="McWilliam S."/>
            <person name="Madan Babu M."/>
            <person name="Madera M."/>
            <person name="Marchionni L."/>
            <person name="Matsuda H."/>
            <person name="Matsuzawa S."/>
            <person name="Miki H."/>
            <person name="Mignone F."/>
            <person name="Miyake S."/>
            <person name="Morris K."/>
            <person name="Mottagui-Tabar S."/>
            <person name="Mulder N."/>
            <person name="Nakano N."/>
            <person name="Nakauchi H."/>
            <person name="Ng P."/>
            <person name="Nilsson R."/>
            <person name="Nishiguchi S."/>
            <person name="Nishikawa S."/>
            <person name="Nori F."/>
            <person name="Ohara O."/>
            <person name="Okazaki Y."/>
            <person name="Orlando V."/>
            <person name="Pang K.C."/>
            <person name="Pavan W.J."/>
            <person name="Pavesi G."/>
            <person name="Pesole G."/>
            <person name="Petrovsky N."/>
            <person name="Piazza S."/>
            <person name="Reed J."/>
            <person name="Reid J.F."/>
            <person name="Ring B.Z."/>
            <person name="Ringwald M."/>
            <person name="Rost B."/>
            <person name="Ruan Y."/>
            <person name="Salzberg S.L."/>
            <person name="Sandelin A."/>
            <person name="Schneider C."/>
            <person name="Schoenbach C."/>
            <person name="Sekiguchi K."/>
            <person name="Semple C.A."/>
            <person name="Seno S."/>
            <person name="Sessa L."/>
            <person name="Sheng Y."/>
            <person name="Shibata Y."/>
            <person name="Shimada H."/>
            <person name="Shimada K."/>
            <person name="Silva D."/>
            <person name="Sinclair B."/>
            <person name="Sperling S."/>
            <person name="Stupka E."/>
            <person name="Sugiura K."/>
            <person name="Sultana R."/>
            <person name="Takenaka Y."/>
            <person name="Taki K."/>
            <person name="Tammoja K."/>
            <person name="Tan S.L."/>
            <person name="Tang S."/>
            <person name="Taylor M.S."/>
            <person name="Tegner J."/>
            <person name="Teichmann S.A."/>
            <person name="Ueda H.R."/>
            <person name="van Nimwegen E."/>
            <person name="Verardo R."/>
            <person name="Wei C.L."/>
            <person name="Yagi K."/>
            <person name="Yamanishi H."/>
            <person name="Zabarovsky E."/>
            <person name="Zhu S."/>
            <person name="Zimmer A."/>
            <person name="Hide W."/>
            <person name="Bult C."/>
            <person name="Grimmond S.M."/>
            <person name="Teasdale R.D."/>
            <person name="Liu E.T."/>
            <person name="Brusic V."/>
            <person name="Quackenbush J."/>
            <person name="Wahlestedt C."/>
            <person name="Mattick J.S."/>
            <person name="Hume D.A."/>
            <person name="Kai C."/>
            <person name="Sasaki D."/>
            <person name="Tomaru Y."/>
            <person name="Fukuda S."/>
            <person name="Kanamori-Katayama M."/>
            <person name="Suzuki M."/>
            <person name="Aoki J."/>
            <person name="Arakawa T."/>
            <person name="Iida J."/>
            <person name="Imamura K."/>
            <person name="Itoh M."/>
            <person name="Kato T."/>
            <person name="Kawaji H."/>
            <person name="Kawagashira N."/>
            <person name="Kawashima T."/>
            <person name="Kojima M."/>
            <person name="Kondo S."/>
            <person name="Konno H."/>
            <person name="Nakano K."/>
            <person name="Ninomiya N."/>
            <person name="Nishio T."/>
            <person name="Okada M."/>
            <person name="Plessy C."/>
            <person name="Shibata K."/>
            <person name="Shiraki T."/>
            <person name="Suzuki S."/>
            <person name="Tagami M."/>
            <person name="Waki K."/>
            <person name="Watahiki A."/>
            <person name="Okamura-Oho Y."/>
            <person name="Suzuki H."/>
            <person name="Kawai J."/>
            <person name="Hayashizaki Y."/>
        </authorList>
    </citation>
    <scope>NUCLEOTIDE SEQUENCE [LARGE SCALE MRNA]</scope>
    <source>
        <strain>C57BL/6J</strain>
        <tissue>Sympathetic ganglion</tissue>
        <tissue>Testis</tissue>
    </source>
</reference>
<reference key="2">
    <citation type="journal article" date="2004" name="Genome Res.">
        <title>The status, quality, and expansion of the NIH full-length cDNA project: the Mammalian Gene Collection (MGC).</title>
        <authorList>
            <consortium name="The MGC Project Team"/>
        </authorList>
    </citation>
    <scope>NUCLEOTIDE SEQUENCE [LARGE SCALE MRNA]</scope>
    <source>
        <tissue>Olfactory epithelium</tissue>
    </source>
</reference>
<reference key="3">
    <citation type="journal article" date="2017" name="Eur. J. Cell Biol.">
        <title>Ccdc181 is a microtubule-binding protein that interacts with Hook1 in haploid male germ cells and localizes to the sperm tail and motile cilia.</title>
        <authorList>
            <person name="Schwarz T."/>
            <person name="Prieler B."/>
            <person name="Schmid J.A."/>
            <person name="Grzmil P."/>
            <person name="Neesen J."/>
        </authorList>
    </citation>
    <scope>FUNCTION</scope>
    <scope>SUBUNIT</scope>
    <scope>INTERACTION WITH HOOK1; HOOK2 AND HOOK3</scope>
    <scope>TISSUE SPECIFICITY</scope>
    <scope>DEVELOPMENTAL STAGE</scope>
</reference>
<protein>
    <recommendedName>
        <fullName evidence="4">Coiled-coil domain-containing protein 181</fullName>
    </recommendedName>
</protein>